<protein>
    <recommendedName>
        <fullName>Uncharacterized protein TV0719</fullName>
    </recommendedName>
</protein>
<gene>
    <name type="ordered locus">TV0719</name>
    <name type="ORF">TVG0726109</name>
</gene>
<proteinExistence type="inferred from homology"/>
<reference key="1">
    <citation type="journal article" date="2000" name="Proc. Natl. Acad. Sci. U.S.A.">
        <title>Archaeal adaptation to higher temperatures revealed by genomic sequence of Thermoplasma volcanium.</title>
        <authorList>
            <person name="Kawashima T."/>
            <person name="Amano N."/>
            <person name="Koike H."/>
            <person name="Makino S."/>
            <person name="Higuchi S."/>
            <person name="Kawashima-Ohya Y."/>
            <person name="Watanabe K."/>
            <person name="Yamazaki M."/>
            <person name="Kanehori K."/>
            <person name="Kawamoto T."/>
            <person name="Nunoshiba T."/>
            <person name="Yamamoto Y."/>
            <person name="Aramaki H."/>
            <person name="Makino K."/>
            <person name="Suzuki M."/>
        </authorList>
    </citation>
    <scope>NUCLEOTIDE SEQUENCE [LARGE SCALE GENOMIC DNA]</scope>
    <source>
        <strain>ATCC 51530 / DSM 4299 / JCM 9571 / NBRC 15438 / GSS1</strain>
    </source>
</reference>
<evidence type="ECO:0000255" key="1">
    <source>
        <dbReference type="PROSITE-ProRule" id="PRU00490"/>
    </source>
</evidence>
<evidence type="ECO:0000305" key="2"/>
<name>Y719_THEVO</name>
<organism>
    <name type="scientific">Thermoplasma volcanium (strain ATCC 51530 / DSM 4299 / JCM 9571 / NBRC 15438 / GSS1)</name>
    <dbReference type="NCBI Taxonomy" id="273116"/>
    <lineage>
        <taxon>Archaea</taxon>
        <taxon>Methanobacteriati</taxon>
        <taxon>Thermoplasmatota</taxon>
        <taxon>Thermoplasmata</taxon>
        <taxon>Thermoplasmatales</taxon>
        <taxon>Thermoplasmataceae</taxon>
        <taxon>Thermoplasma</taxon>
    </lineage>
</organism>
<feature type="chain" id="PRO_0000089240" description="Uncharacterized protein TV0719">
    <location>
        <begin position="1"/>
        <end position="186"/>
    </location>
</feature>
<feature type="domain" description="Macro" evidence="1">
    <location>
        <begin position="1"/>
        <end position="181"/>
    </location>
</feature>
<comment type="similarity">
    <text evidence="2">Belongs to the MacroD-type family.</text>
</comment>
<sequence length="186" mass="20229">MVSFSYKGNLIEIIEGDITDVNCEAIVNAANPSLMGGGGVDGAIHLKGGKTIDLECAELRRTKWPKGLPPGEADITSGGKLKAKYVIHTVGPIYRGQEEDAETLYSSYYRSLEIAKIHGIKCIAFPAISTGIYGYPFEEASVIALKAVTDFLSNKEGYIIKFVLYGQARYQTFVSLASDFLMAYNP</sequence>
<dbReference type="EMBL" id="BA000011">
    <property type="protein sequence ID" value="BAB59861.1"/>
    <property type="molecule type" value="Genomic_DNA"/>
</dbReference>
<dbReference type="RefSeq" id="WP_010916977.1">
    <property type="nucleotide sequence ID" value="NC_002689.2"/>
</dbReference>
<dbReference type="SMR" id="Q97AU0"/>
<dbReference type="STRING" id="273116.gene:9381508"/>
<dbReference type="PaxDb" id="273116-14324935"/>
<dbReference type="GeneID" id="1441825"/>
<dbReference type="KEGG" id="tvo:TVG0726109"/>
<dbReference type="eggNOG" id="arCOG04225">
    <property type="taxonomic scope" value="Archaea"/>
</dbReference>
<dbReference type="HOGENOM" id="CLU_046550_5_1_2"/>
<dbReference type="OrthoDB" id="57099at2157"/>
<dbReference type="PhylomeDB" id="Q97AU0"/>
<dbReference type="Proteomes" id="UP000001017">
    <property type="component" value="Chromosome"/>
</dbReference>
<dbReference type="CDD" id="cd02908">
    <property type="entry name" value="Macro_OAADPr_deacetylase"/>
    <property type="match status" value="1"/>
</dbReference>
<dbReference type="Gene3D" id="3.40.220.10">
    <property type="entry name" value="Leucine Aminopeptidase, subunit E, domain 1"/>
    <property type="match status" value="1"/>
</dbReference>
<dbReference type="InterPro" id="IPR002589">
    <property type="entry name" value="Macro_dom"/>
</dbReference>
<dbReference type="InterPro" id="IPR043472">
    <property type="entry name" value="Macro_dom-like"/>
</dbReference>
<dbReference type="NCBIfam" id="NF001664">
    <property type="entry name" value="PRK00431.1-6"/>
    <property type="match status" value="1"/>
</dbReference>
<dbReference type="PANTHER" id="PTHR11106">
    <property type="entry name" value="GANGLIOSIDE INDUCED DIFFERENTIATION ASSOCIATED PROTEIN 2-RELATED"/>
    <property type="match status" value="1"/>
</dbReference>
<dbReference type="PANTHER" id="PTHR11106:SF27">
    <property type="entry name" value="MACRO DOMAIN-CONTAINING PROTEIN"/>
    <property type="match status" value="1"/>
</dbReference>
<dbReference type="Pfam" id="PF01661">
    <property type="entry name" value="Macro"/>
    <property type="match status" value="1"/>
</dbReference>
<dbReference type="SMART" id="SM00506">
    <property type="entry name" value="A1pp"/>
    <property type="match status" value="1"/>
</dbReference>
<dbReference type="SUPFAM" id="SSF52949">
    <property type="entry name" value="Macro domain-like"/>
    <property type="match status" value="1"/>
</dbReference>
<dbReference type="PROSITE" id="PS51154">
    <property type="entry name" value="MACRO"/>
    <property type="match status" value="1"/>
</dbReference>
<accession>Q97AU0</accession>